<proteinExistence type="uncertain"/>
<feature type="chain" id="PRO_0000168696" description="Putative protein YbfL">
    <location>
        <begin position="1"/>
        <end position="378"/>
    </location>
</feature>
<accession>P75741</accession>
<accession>Q9R7S9</accession>
<accession>Q9R7T0</accession>
<comment type="similarity">
    <text evidence="1">Belongs to the transposase 11 family.</text>
</comment>
<comment type="caution">
    <text evidence="1">Could be the product of a pseudogene.</text>
</comment>
<comment type="sequence caution" evidence="1">
    <conflict type="erroneous termination">
        <sequence resource="EMBL-CDS" id="AAC63075"/>
    </conflict>
    <text>Truncated C-terminus.</text>
</comment>
<comment type="sequence caution" evidence="1">
    <conflict type="erroneous termination">
        <sequence resource="EMBL" id="AP009048"/>
    </conflict>
    <text>Truncated C-terminus.</text>
</comment>
<comment type="sequence caution" evidence="1">
    <conflict type="erroneous termination">
        <sequence resource="EMBL" id="U00096"/>
    </conflict>
    <text>Truncated C-terminus.</text>
</comment>
<sequence length="378" mass="43161">MELKKLMEHISIIPDYRQAWKVEHKLSGILLLTIFAVISGAESWEDIEDFGETHLDFLKQYGDFENGIPVHDTIARVVSCISPAKFHECFINWMRDCHSSNDKDVIAIDGKTLRHSYDKSRRRGAIHVISAFSTMHSLVIGQIKTDKKSNEITAIPELLNMLDIKGKIITTDAMGCQKDIAEKIQKQGGDYLFAVKGNQGRLNKAFEEKFPLKELNNPEHDSYAMSEKSHGREEIRLHIVCDVPDELIDFTFEWKGLKKLCVAVSFRSIIAEQKKEPEMTVRYYISSADLTAEKFATAIRNHWHVENKLHWRLDVVMNEDDCKIRRGNAAELFSGIRHIAINILTNDKVFKAGLRRKMRKAAMDRNYLASVLAGSGLS</sequence>
<name>YBFL_ECOLI</name>
<reference key="1">
    <citation type="journal article" date="1993" name="J. Bacteriol.">
        <title>Rhs elements of Escherichia coli K-12: complex composites of shared and unique components that have different evolutionary histories.</title>
        <authorList>
            <person name="Zhao S."/>
            <person name="Sandt C.H."/>
            <person name="Feulner G."/>
            <person name="Vlazny D.A."/>
            <person name="Gray J.A."/>
            <person name="Hill C.W."/>
        </authorList>
    </citation>
    <scope>NUCLEOTIDE SEQUENCE [GENOMIC DNA]</scope>
    <source>
        <strain>K12</strain>
    </source>
</reference>
<reference key="2">
    <citation type="journal article" date="1996" name="DNA Res.">
        <title>A 718-kb DNA sequence of the Escherichia coli K-12 genome corresponding to the 12.7-28.0 min region on the linkage map.</title>
        <authorList>
            <person name="Oshima T."/>
            <person name="Aiba H."/>
            <person name="Baba T."/>
            <person name="Fujita K."/>
            <person name="Hayashi K."/>
            <person name="Honjo A."/>
            <person name="Ikemoto K."/>
            <person name="Inada T."/>
            <person name="Itoh T."/>
            <person name="Kajihara M."/>
            <person name="Kanai K."/>
            <person name="Kashimoto K."/>
            <person name="Kimura S."/>
            <person name="Kitagawa M."/>
            <person name="Makino K."/>
            <person name="Masuda S."/>
            <person name="Miki T."/>
            <person name="Mizobuchi K."/>
            <person name="Mori H."/>
            <person name="Motomura K."/>
            <person name="Nakamura Y."/>
            <person name="Nashimoto H."/>
            <person name="Nishio Y."/>
            <person name="Saito N."/>
            <person name="Sampei G."/>
            <person name="Seki Y."/>
            <person name="Tagami H."/>
            <person name="Takemoto K."/>
            <person name="Wada C."/>
            <person name="Yamamoto Y."/>
            <person name="Yano M."/>
            <person name="Horiuchi T."/>
        </authorList>
    </citation>
    <scope>NUCLEOTIDE SEQUENCE [LARGE SCALE GENOMIC DNA]</scope>
    <source>
        <strain>K12 / W3110 / ATCC 27325 / DSM 5911</strain>
    </source>
</reference>
<reference key="3">
    <citation type="journal article" date="1997" name="Science">
        <title>The complete genome sequence of Escherichia coli K-12.</title>
        <authorList>
            <person name="Blattner F.R."/>
            <person name="Plunkett G. III"/>
            <person name="Bloch C.A."/>
            <person name="Perna N.T."/>
            <person name="Burland V."/>
            <person name="Riley M."/>
            <person name="Collado-Vides J."/>
            <person name="Glasner J.D."/>
            <person name="Rode C.K."/>
            <person name="Mayhew G.F."/>
            <person name="Gregor J."/>
            <person name="Davis N.W."/>
            <person name="Kirkpatrick H.A."/>
            <person name="Goeden M.A."/>
            <person name="Rose D.J."/>
            <person name="Mau B."/>
            <person name="Shao Y."/>
        </authorList>
    </citation>
    <scope>NUCLEOTIDE SEQUENCE [LARGE SCALE GENOMIC DNA]</scope>
    <source>
        <strain>K12 / MG1655 / ATCC 47076</strain>
    </source>
</reference>
<reference key="4">
    <citation type="journal article" date="2006" name="Mol. Syst. Biol.">
        <title>Highly accurate genome sequences of Escherichia coli K-12 strains MG1655 and W3110.</title>
        <authorList>
            <person name="Hayashi K."/>
            <person name="Morooka N."/>
            <person name="Yamamoto Y."/>
            <person name="Fujita K."/>
            <person name="Isono K."/>
            <person name="Choi S."/>
            <person name="Ohtsubo E."/>
            <person name="Baba T."/>
            <person name="Wanner B.L."/>
            <person name="Mori H."/>
            <person name="Horiuchi T."/>
        </authorList>
    </citation>
    <scope>NUCLEOTIDE SEQUENCE [LARGE SCALE GENOMIC DNA]</scope>
    <source>
        <strain>K12 / W3110 / ATCC 27325 / DSM 5911</strain>
    </source>
</reference>
<keyword id="KW-1185">Reference proteome</keyword>
<protein>
    <recommendedName>
        <fullName>Putative protein YbfL</fullName>
    </recommendedName>
    <alternativeName>
        <fullName>H repeat-associated protein in rhsC-phrB intergenic region</fullName>
    </alternativeName>
    <alternativeName>
        <fullName>ORF-H2</fullName>
    </alternativeName>
</protein>
<gene>
    <name type="primary">ybfL</name>
    <name type="ordered locus">b0705</name>
    <name type="ordered locus">JW0695</name>
</gene>
<dbReference type="EMBL" id="L02373">
    <property type="protein sequence ID" value="AAC63075.1"/>
    <property type="status" value="ALT_SEQ"/>
    <property type="molecule type" value="Genomic_DNA"/>
</dbReference>
<dbReference type="EMBL" id="U00096">
    <property type="status" value="NOT_ANNOTATED_CDS"/>
    <property type="molecule type" value="Genomic_DNA"/>
</dbReference>
<dbReference type="EMBL" id="AP009048">
    <property type="status" value="NOT_ANNOTATED_CDS"/>
    <property type="molecule type" value="Genomic_DNA"/>
</dbReference>
<dbReference type="PIR" id="H64805">
    <property type="entry name" value="H64805"/>
</dbReference>
<dbReference type="FunCoup" id="P75741">
    <property type="interactions" value="231"/>
</dbReference>
<dbReference type="IntAct" id="P75741">
    <property type="interactions" value="7"/>
</dbReference>
<dbReference type="EchoBASE" id="EB3193"/>
<dbReference type="InParanoid" id="P75741"/>
<dbReference type="PhylomeDB" id="P75741"/>
<dbReference type="Proteomes" id="UP000000625">
    <property type="component" value="Chromosome"/>
</dbReference>
<dbReference type="GO" id="GO:0003677">
    <property type="term" value="F:DNA binding"/>
    <property type="evidence" value="ECO:0007669"/>
    <property type="project" value="InterPro"/>
</dbReference>
<dbReference type="GO" id="GO:0004803">
    <property type="term" value="F:transposase activity"/>
    <property type="evidence" value="ECO:0007669"/>
    <property type="project" value="InterPro"/>
</dbReference>
<dbReference type="GO" id="GO:0006313">
    <property type="term" value="P:DNA transposition"/>
    <property type="evidence" value="ECO:0007669"/>
    <property type="project" value="InterPro"/>
</dbReference>
<dbReference type="InterPro" id="IPR047647">
    <property type="entry name" value="ISAs1_transpos"/>
</dbReference>
<dbReference type="InterPro" id="IPR002559">
    <property type="entry name" value="Transposase_11"/>
</dbReference>
<dbReference type="InterPro" id="IPR051698">
    <property type="entry name" value="Transposase_11-like"/>
</dbReference>
<dbReference type="InterPro" id="IPR032806">
    <property type="entry name" value="YbfD_N"/>
</dbReference>
<dbReference type="NCBIfam" id="NF033564">
    <property type="entry name" value="transpos_ISAs1"/>
    <property type="match status" value="1"/>
</dbReference>
<dbReference type="PANTHER" id="PTHR30298">
    <property type="entry name" value="H REPEAT-ASSOCIATED PREDICTED TRANSPOSASE"/>
    <property type="match status" value="1"/>
</dbReference>
<dbReference type="PANTHER" id="PTHR30298:SF0">
    <property type="entry name" value="PROTEIN YBFL-RELATED"/>
    <property type="match status" value="1"/>
</dbReference>
<dbReference type="Pfam" id="PF01609">
    <property type="entry name" value="DDE_Tnp_1"/>
    <property type="match status" value="1"/>
</dbReference>
<dbReference type="Pfam" id="PF13808">
    <property type="entry name" value="DDE_Tnp_1_assoc"/>
    <property type="match status" value="1"/>
</dbReference>
<organism>
    <name type="scientific">Escherichia coli (strain K12)</name>
    <dbReference type="NCBI Taxonomy" id="83333"/>
    <lineage>
        <taxon>Bacteria</taxon>
        <taxon>Pseudomonadati</taxon>
        <taxon>Pseudomonadota</taxon>
        <taxon>Gammaproteobacteria</taxon>
        <taxon>Enterobacterales</taxon>
        <taxon>Enterobacteriaceae</taxon>
        <taxon>Escherichia</taxon>
    </lineage>
</organism>
<evidence type="ECO:0000305" key="1"/>